<accession>A0M4W4</accession>
<organism>
    <name type="scientific">Christiangramia forsetii (strain DSM 17595 / CGMCC 1.15422 / KT0803)</name>
    <name type="common">Gramella forsetii</name>
    <dbReference type="NCBI Taxonomy" id="411154"/>
    <lineage>
        <taxon>Bacteria</taxon>
        <taxon>Pseudomonadati</taxon>
        <taxon>Bacteroidota</taxon>
        <taxon>Flavobacteriia</taxon>
        <taxon>Flavobacteriales</taxon>
        <taxon>Flavobacteriaceae</taxon>
        <taxon>Christiangramia</taxon>
    </lineage>
</organism>
<gene>
    <name evidence="1" type="primary">lipA</name>
    <name type="ordered locus">GFO_2703</name>
</gene>
<proteinExistence type="inferred from homology"/>
<protein>
    <recommendedName>
        <fullName evidence="1">Lipoyl synthase</fullName>
        <ecNumber evidence="1">2.8.1.8</ecNumber>
    </recommendedName>
    <alternativeName>
        <fullName evidence="1">Lip-syn</fullName>
        <shortName evidence="1">LS</shortName>
    </alternativeName>
    <alternativeName>
        <fullName evidence="1">Lipoate synthase</fullName>
    </alternativeName>
    <alternativeName>
        <fullName evidence="1">Lipoic acid synthase</fullName>
    </alternativeName>
    <alternativeName>
        <fullName evidence="1">Sulfur insertion protein LipA</fullName>
    </alternativeName>
</protein>
<sequence>MNTDVAPVKSKTERKPKPKWLRVKLPTGKKYTELRNLVDKYDLHTICTSGSCPNMGECWSEGTATFMILGNVCTRSCGFCGVKTGRPETVDWDEPEKVARSIKLMQIKHAVVTSVDRDDLKDMGSIVWAETVKAIRRMNPETTLETLIPDFQGNERNIDRIIEVAPEVVSHNMETVKRLTREVRIQAKYDRSLAVLKYLKDNGIRRTKSGIMLGLGEQEEEVIQTLKDLREAGVDVVTIGQYLQPSKKHLPVKQFITPDQFQKYEKIGLELGFRHVESSALVRSSYKAQKHLN</sequence>
<feature type="chain" id="PRO_0000325259" description="Lipoyl synthase">
    <location>
        <begin position="1"/>
        <end position="293"/>
    </location>
</feature>
<feature type="domain" description="Radical SAM core" evidence="2">
    <location>
        <begin position="59"/>
        <end position="274"/>
    </location>
</feature>
<feature type="binding site" evidence="1">
    <location>
        <position position="47"/>
    </location>
    <ligand>
        <name>[4Fe-4S] cluster</name>
        <dbReference type="ChEBI" id="CHEBI:49883"/>
        <label>1</label>
    </ligand>
</feature>
<feature type="binding site" evidence="1">
    <location>
        <position position="52"/>
    </location>
    <ligand>
        <name>[4Fe-4S] cluster</name>
        <dbReference type="ChEBI" id="CHEBI:49883"/>
        <label>1</label>
    </ligand>
</feature>
<feature type="binding site" evidence="1">
    <location>
        <position position="58"/>
    </location>
    <ligand>
        <name>[4Fe-4S] cluster</name>
        <dbReference type="ChEBI" id="CHEBI:49883"/>
        <label>1</label>
    </ligand>
</feature>
<feature type="binding site" evidence="1">
    <location>
        <position position="73"/>
    </location>
    <ligand>
        <name>[4Fe-4S] cluster</name>
        <dbReference type="ChEBI" id="CHEBI:49883"/>
        <label>2</label>
        <note>4Fe-4S-S-AdoMet</note>
    </ligand>
</feature>
<feature type="binding site" evidence="1">
    <location>
        <position position="77"/>
    </location>
    <ligand>
        <name>[4Fe-4S] cluster</name>
        <dbReference type="ChEBI" id="CHEBI:49883"/>
        <label>2</label>
        <note>4Fe-4S-S-AdoMet</note>
    </ligand>
</feature>
<feature type="binding site" evidence="1">
    <location>
        <position position="80"/>
    </location>
    <ligand>
        <name>[4Fe-4S] cluster</name>
        <dbReference type="ChEBI" id="CHEBI:49883"/>
        <label>2</label>
        <note>4Fe-4S-S-AdoMet</note>
    </ligand>
</feature>
<feature type="binding site" evidence="1">
    <location>
        <position position="285"/>
    </location>
    <ligand>
        <name>[4Fe-4S] cluster</name>
        <dbReference type="ChEBI" id="CHEBI:49883"/>
        <label>1</label>
    </ligand>
</feature>
<reference key="1">
    <citation type="journal article" date="2006" name="Environ. Microbiol.">
        <title>Whole genome analysis of the marine Bacteroidetes'Gramella forsetii' reveals adaptations to degradation of polymeric organic matter.</title>
        <authorList>
            <person name="Bauer M."/>
            <person name="Kube M."/>
            <person name="Teeling H."/>
            <person name="Richter M."/>
            <person name="Lombardot T."/>
            <person name="Allers E."/>
            <person name="Wuerdemann C.A."/>
            <person name="Quast C."/>
            <person name="Kuhl H."/>
            <person name="Knaust F."/>
            <person name="Woebken D."/>
            <person name="Bischof K."/>
            <person name="Mussmann M."/>
            <person name="Choudhuri J.V."/>
            <person name="Meyer F."/>
            <person name="Reinhardt R."/>
            <person name="Amann R.I."/>
            <person name="Gloeckner F.O."/>
        </authorList>
    </citation>
    <scope>NUCLEOTIDE SEQUENCE [LARGE SCALE GENOMIC DNA]</scope>
    <source>
        <strain>DSM 17595 / CGMCC 1.15422 / KT0803</strain>
    </source>
</reference>
<comment type="function">
    <text evidence="1">Catalyzes the radical-mediated insertion of two sulfur atoms into the C-6 and C-8 positions of the octanoyl moiety bound to the lipoyl domains of lipoate-dependent enzymes, thereby converting the octanoylated domains into lipoylated derivatives.</text>
</comment>
<comment type="catalytic activity">
    <reaction evidence="1">
        <text>[[Fe-S] cluster scaffold protein carrying a second [4Fe-4S](2+) cluster] + N(6)-octanoyl-L-lysyl-[protein] + 2 oxidized [2Fe-2S]-[ferredoxin] + 2 S-adenosyl-L-methionine + 4 H(+) = [[Fe-S] cluster scaffold protein] + N(6)-[(R)-dihydrolipoyl]-L-lysyl-[protein] + 4 Fe(3+) + 2 hydrogen sulfide + 2 5'-deoxyadenosine + 2 L-methionine + 2 reduced [2Fe-2S]-[ferredoxin]</text>
        <dbReference type="Rhea" id="RHEA:16585"/>
        <dbReference type="Rhea" id="RHEA-COMP:9928"/>
        <dbReference type="Rhea" id="RHEA-COMP:10000"/>
        <dbReference type="Rhea" id="RHEA-COMP:10001"/>
        <dbReference type="Rhea" id="RHEA-COMP:10475"/>
        <dbReference type="Rhea" id="RHEA-COMP:14568"/>
        <dbReference type="Rhea" id="RHEA-COMP:14569"/>
        <dbReference type="ChEBI" id="CHEBI:15378"/>
        <dbReference type="ChEBI" id="CHEBI:17319"/>
        <dbReference type="ChEBI" id="CHEBI:29034"/>
        <dbReference type="ChEBI" id="CHEBI:29919"/>
        <dbReference type="ChEBI" id="CHEBI:33722"/>
        <dbReference type="ChEBI" id="CHEBI:33737"/>
        <dbReference type="ChEBI" id="CHEBI:33738"/>
        <dbReference type="ChEBI" id="CHEBI:57844"/>
        <dbReference type="ChEBI" id="CHEBI:59789"/>
        <dbReference type="ChEBI" id="CHEBI:78809"/>
        <dbReference type="ChEBI" id="CHEBI:83100"/>
        <dbReference type="EC" id="2.8.1.8"/>
    </reaction>
</comment>
<comment type="cofactor">
    <cofactor evidence="1">
        <name>[4Fe-4S] cluster</name>
        <dbReference type="ChEBI" id="CHEBI:49883"/>
    </cofactor>
    <text evidence="1">Binds 2 [4Fe-4S] clusters per subunit. One cluster is coordinated with 3 cysteines and an exchangeable S-adenosyl-L-methionine.</text>
</comment>
<comment type="pathway">
    <text evidence="1">Protein modification; protein lipoylation via endogenous pathway; protein N(6)-(lipoyl)lysine from octanoyl-[acyl-carrier-protein]: step 2/2.</text>
</comment>
<comment type="subcellular location">
    <subcellularLocation>
        <location evidence="1">Cytoplasm</location>
    </subcellularLocation>
</comment>
<comment type="similarity">
    <text evidence="1">Belongs to the radical SAM superfamily. Lipoyl synthase family.</text>
</comment>
<name>LIPA_CHRFK</name>
<dbReference type="EC" id="2.8.1.8" evidence="1"/>
<dbReference type="EMBL" id="CU207366">
    <property type="protein sequence ID" value="CAL67659.1"/>
    <property type="molecule type" value="Genomic_DNA"/>
</dbReference>
<dbReference type="RefSeq" id="WP_011710562.1">
    <property type="nucleotide sequence ID" value="NC_008571.1"/>
</dbReference>
<dbReference type="SMR" id="A0M4W4"/>
<dbReference type="STRING" id="411154.GFO_2703"/>
<dbReference type="KEGG" id="gfo:GFO_2703"/>
<dbReference type="eggNOG" id="COG0320">
    <property type="taxonomic scope" value="Bacteria"/>
</dbReference>
<dbReference type="HOGENOM" id="CLU_033144_2_1_10"/>
<dbReference type="OrthoDB" id="9787898at2"/>
<dbReference type="UniPathway" id="UPA00538">
    <property type="reaction ID" value="UER00593"/>
</dbReference>
<dbReference type="Proteomes" id="UP000000755">
    <property type="component" value="Chromosome"/>
</dbReference>
<dbReference type="GO" id="GO:0005737">
    <property type="term" value="C:cytoplasm"/>
    <property type="evidence" value="ECO:0007669"/>
    <property type="project" value="UniProtKB-SubCell"/>
</dbReference>
<dbReference type="GO" id="GO:0051539">
    <property type="term" value="F:4 iron, 4 sulfur cluster binding"/>
    <property type="evidence" value="ECO:0007669"/>
    <property type="project" value="UniProtKB-UniRule"/>
</dbReference>
<dbReference type="GO" id="GO:0016992">
    <property type="term" value="F:lipoate synthase activity"/>
    <property type="evidence" value="ECO:0007669"/>
    <property type="project" value="UniProtKB-UniRule"/>
</dbReference>
<dbReference type="GO" id="GO:0046872">
    <property type="term" value="F:metal ion binding"/>
    <property type="evidence" value="ECO:0007669"/>
    <property type="project" value="UniProtKB-KW"/>
</dbReference>
<dbReference type="CDD" id="cd01335">
    <property type="entry name" value="Radical_SAM"/>
    <property type="match status" value="1"/>
</dbReference>
<dbReference type="FunFam" id="3.20.20.70:FF:000040">
    <property type="entry name" value="Lipoyl synthase"/>
    <property type="match status" value="1"/>
</dbReference>
<dbReference type="Gene3D" id="3.20.20.70">
    <property type="entry name" value="Aldolase class I"/>
    <property type="match status" value="1"/>
</dbReference>
<dbReference type="HAMAP" id="MF_00206">
    <property type="entry name" value="Lipoyl_synth"/>
    <property type="match status" value="1"/>
</dbReference>
<dbReference type="InterPro" id="IPR013785">
    <property type="entry name" value="Aldolase_TIM"/>
</dbReference>
<dbReference type="InterPro" id="IPR006638">
    <property type="entry name" value="Elp3/MiaA/NifB-like_rSAM"/>
</dbReference>
<dbReference type="InterPro" id="IPR031691">
    <property type="entry name" value="LIAS_N"/>
</dbReference>
<dbReference type="InterPro" id="IPR003698">
    <property type="entry name" value="Lipoyl_synth"/>
</dbReference>
<dbReference type="InterPro" id="IPR007197">
    <property type="entry name" value="rSAM"/>
</dbReference>
<dbReference type="NCBIfam" id="TIGR00510">
    <property type="entry name" value="lipA"/>
    <property type="match status" value="1"/>
</dbReference>
<dbReference type="NCBIfam" id="NF004019">
    <property type="entry name" value="PRK05481.1"/>
    <property type="match status" value="1"/>
</dbReference>
<dbReference type="NCBIfam" id="NF009544">
    <property type="entry name" value="PRK12928.1"/>
    <property type="match status" value="1"/>
</dbReference>
<dbReference type="PANTHER" id="PTHR10949">
    <property type="entry name" value="LIPOYL SYNTHASE"/>
    <property type="match status" value="1"/>
</dbReference>
<dbReference type="PANTHER" id="PTHR10949:SF0">
    <property type="entry name" value="LIPOYL SYNTHASE, MITOCHONDRIAL"/>
    <property type="match status" value="1"/>
</dbReference>
<dbReference type="Pfam" id="PF16881">
    <property type="entry name" value="LIAS_N"/>
    <property type="match status" value="1"/>
</dbReference>
<dbReference type="Pfam" id="PF04055">
    <property type="entry name" value="Radical_SAM"/>
    <property type="match status" value="1"/>
</dbReference>
<dbReference type="PIRSF" id="PIRSF005963">
    <property type="entry name" value="Lipoyl_synth"/>
    <property type="match status" value="1"/>
</dbReference>
<dbReference type="SFLD" id="SFLDF00271">
    <property type="entry name" value="lipoyl_synthase"/>
    <property type="match status" value="1"/>
</dbReference>
<dbReference type="SFLD" id="SFLDG01058">
    <property type="entry name" value="lipoyl_synthase_like"/>
    <property type="match status" value="1"/>
</dbReference>
<dbReference type="SMART" id="SM00729">
    <property type="entry name" value="Elp3"/>
    <property type="match status" value="1"/>
</dbReference>
<dbReference type="SUPFAM" id="SSF102114">
    <property type="entry name" value="Radical SAM enzymes"/>
    <property type="match status" value="1"/>
</dbReference>
<dbReference type="PROSITE" id="PS51918">
    <property type="entry name" value="RADICAL_SAM"/>
    <property type="match status" value="1"/>
</dbReference>
<evidence type="ECO:0000255" key="1">
    <source>
        <dbReference type="HAMAP-Rule" id="MF_00206"/>
    </source>
</evidence>
<evidence type="ECO:0000255" key="2">
    <source>
        <dbReference type="PROSITE-ProRule" id="PRU01266"/>
    </source>
</evidence>
<keyword id="KW-0004">4Fe-4S</keyword>
<keyword id="KW-0963">Cytoplasm</keyword>
<keyword id="KW-0408">Iron</keyword>
<keyword id="KW-0411">Iron-sulfur</keyword>
<keyword id="KW-0479">Metal-binding</keyword>
<keyword id="KW-0949">S-adenosyl-L-methionine</keyword>
<keyword id="KW-0808">Transferase</keyword>